<organism>
    <name type="scientific">Ophiophagus hannah</name>
    <name type="common">King cobra</name>
    <name type="synonym">Naja hannah</name>
    <dbReference type="NCBI Taxonomy" id="8665"/>
    <lineage>
        <taxon>Eukaryota</taxon>
        <taxon>Metazoa</taxon>
        <taxon>Chordata</taxon>
        <taxon>Craniata</taxon>
        <taxon>Vertebrata</taxon>
        <taxon>Euteleostomi</taxon>
        <taxon>Lepidosauria</taxon>
        <taxon>Squamata</taxon>
        <taxon>Bifurcata</taxon>
        <taxon>Unidentata</taxon>
        <taxon>Episquamata</taxon>
        <taxon>Toxicofera</taxon>
        <taxon>Serpentes</taxon>
        <taxon>Colubroidea</taxon>
        <taxon>Elapidae</taxon>
        <taxon>Elapinae</taxon>
        <taxon>Ophiophagus</taxon>
    </lineage>
</organism>
<keyword id="KW-0963">Cytoplasm</keyword>
<keyword id="KW-1017">Isopeptide bond</keyword>
<keyword id="KW-0488">Methylation</keyword>
<keyword id="KW-0539">Nucleus</keyword>
<keyword id="KW-0687">Ribonucleoprotein</keyword>
<keyword id="KW-0689">Ribosomal protein</keyword>
<keyword id="KW-0832">Ubl conjugation</keyword>
<proteinExistence type="evidence at transcript level"/>
<reference key="1">
    <citation type="submission" date="2000-08" db="EMBL/GenBank/DDBJ databases">
        <title>cDNA sequence of king cobra (Ophiophagus hannah) ubiquitin fusion protein.</title>
        <authorList>
            <person name="Lee W."/>
            <person name="Zhang Y."/>
        </authorList>
    </citation>
    <scope>NUCLEOTIDE SEQUENCE [MRNA]</scope>
    <source>
        <tissue>Venom gland</tissue>
    </source>
</reference>
<evidence type="ECO:0000250" key="1"/>
<evidence type="ECO:0000250" key="2">
    <source>
        <dbReference type="UniProtKB" id="P62987"/>
    </source>
</evidence>
<evidence type="ECO:0000255" key="3">
    <source>
        <dbReference type="PROSITE-ProRule" id="PRU00214"/>
    </source>
</evidence>
<evidence type="ECO:0000305" key="4"/>
<comment type="function">
    <molecule>Ubiquitin</molecule>
    <text evidence="2">Exists either covalently attached to another protein, or free (unanchored). When covalently bound, it is conjugated to target proteins via an isopeptide bond either as a monomer (monoubiquitin), a polymer linked via different Lys residues of the ubiquitin (polyubiquitin chains) or a linear polymer linked via the initiator Met of the ubiquitin (linear polyubiquitin chains). Polyubiquitin chains, when attached to a target protein, have different functions depending on the Lys residue of the ubiquitin that is linked: Lys-6-linked may be involved in DNA repair; Lys-11-linked is involved in ERAD (endoplasmic reticulum-associated degradation) and in cell-cycle regulation; Lys-29-linked is involved in proteotoxic stress response and cell cycle; Lys-33-linked is involved in kinase modification; Lys-48-linked is involved in protein degradation via the proteasome; Lys-63-linked is involved in endocytosis, DNA-damage responses as well as in signaling processes leading to activation of the transcription factor NF-kappa-B. Linear polymer chains formed via attachment by the initiator Met lead to cell signaling. Ubiquitin is usually conjugated to Lys residues of target proteins, however, in rare cases, conjugation to Cys or Ser residues has been observed. When polyubiquitin is free (unanchored-polyubiquitin), it also has distinct roles, such as in activation of protein kinases, and in signaling (By similarity).</text>
</comment>
<comment type="function">
    <molecule>Large ribosomal subunit protein eL40</molecule>
    <text evidence="2">Component of the 60S subunit of the ribosome.</text>
</comment>
<comment type="subunit">
    <molecule>Large ribosomal subunit protein eL40</molecule>
    <text evidence="1">Part of the 60S ribosomal subunit.</text>
</comment>
<comment type="subcellular location">
    <molecule>Ubiquitin</molecule>
    <subcellularLocation>
        <location evidence="1">Cytoplasm</location>
    </subcellularLocation>
    <subcellularLocation>
        <location evidence="1">Nucleus</location>
    </subcellularLocation>
</comment>
<comment type="subcellular location">
    <molecule>Large ribosomal subunit protein eL40</molecule>
    <subcellularLocation>
        <location evidence="1">Cytoplasm</location>
    </subcellularLocation>
</comment>
<comment type="miscellaneous">
    <text>Ubiquitin is synthesized as a polyubiquitin precursor with exact head to tail repeats, the number of repeats differs between species. In some species there is a final amino-acid after the last repeat. Some ubiquitin genes contain a single copy of ubiquitin fused to a ribosomal protein (either eL40 or eS31).</text>
</comment>
<comment type="similarity">
    <text evidence="4">In the N-terminal section; belongs to the ubiquitin family.</text>
</comment>
<comment type="similarity">
    <text evidence="4">In the C-terminal section; belongs to the eukaryotic ribosomal protein eL40 family.</text>
</comment>
<accession>P68205</accession>
<accession>P68204</accession>
<accession>Q9DF54</accession>
<dbReference type="EMBL" id="AF297036">
    <property type="protein sequence ID" value="AAG17445.1"/>
    <property type="molecule type" value="mRNA"/>
</dbReference>
<dbReference type="SMR" id="P68205"/>
<dbReference type="GO" id="GO:0005737">
    <property type="term" value="C:cytoplasm"/>
    <property type="evidence" value="ECO:0007669"/>
    <property type="project" value="UniProtKB-SubCell"/>
</dbReference>
<dbReference type="GO" id="GO:0005634">
    <property type="term" value="C:nucleus"/>
    <property type="evidence" value="ECO:0007669"/>
    <property type="project" value="UniProtKB-SubCell"/>
</dbReference>
<dbReference type="GO" id="GO:1990904">
    <property type="term" value="C:ribonucleoprotein complex"/>
    <property type="evidence" value="ECO:0007669"/>
    <property type="project" value="UniProtKB-KW"/>
</dbReference>
<dbReference type="GO" id="GO:0005840">
    <property type="term" value="C:ribosome"/>
    <property type="evidence" value="ECO:0007669"/>
    <property type="project" value="UniProtKB-KW"/>
</dbReference>
<dbReference type="GO" id="GO:0003735">
    <property type="term" value="F:structural constituent of ribosome"/>
    <property type="evidence" value="ECO:0007669"/>
    <property type="project" value="InterPro"/>
</dbReference>
<dbReference type="GO" id="GO:0006412">
    <property type="term" value="P:translation"/>
    <property type="evidence" value="ECO:0007669"/>
    <property type="project" value="InterPro"/>
</dbReference>
<dbReference type="CDD" id="cd01803">
    <property type="entry name" value="Ubl_ubiquitin"/>
    <property type="match status" value="1"/>
</dbReference>
<dbReference type="FunFam" id="3.10.20.90:FF:000014">
    <property type="entry name" value="Ubiquitin-60S ribosomal L40 fusion"/>
    <property type="match status" value="1"/>
</dbReference>
<dbReference type="FunFam" id="4.10.1060.50:FF:000001">
    <property type="entry name" value="ubiquitin-60S ribosomal protein L40"/>
    <property type="match status" value="1"/>
</dbReference>
<dbReference type="Gene3D" id="4.10.1060.50">
    <property type="match status" value="1"/>
</dbReference>
<dbReference type="Gene3D" id="3.10.20.90">
    <property type="entry name" value="Phosphatidylinositol 3-kinase Catalytic Subunit, Chain A, domain 1"/>
    <property type="match status" value="1"/>
</dbReference>
<dbReference type="InterPro" id="IPR001975">
    <property type="entry name" value="Ribosomal_eL40_dom"/>
</dbReference>
<dbReference type="InterPro" id="IPR038587">
    <property type="entry name" value="Ribosomal_eL40_sf"/>
</dbReference>
<dbReference type="InterPro" id="IPR000626">
    <property type="entry name" value="Ubiquitin-like_dom"/>
</dbReference>
<dbReference type="InterPro" id="IPR029071">
    <property type="entry name" value="Ubiquitin-like_domsf"/>
</dbReference>
<dbReference type="InterPro" id="IPR019954">
    <property type="entry name" value="Ubiquitin_CS"/>
</dbReference>
<dbReference type="InterPro" id="IPR019956">
    <property type="entry name" value="Ubiquitin_dom"/>
</dbReference>
<dbReference type="InterPro" id="IPR050158">
    <property type="entry name" value="Ubiquitin_ubiquitin-like"/>
</dbReference>
<dbReference type="PANTHER" id="PTHR10666">
    <property type="entry name" value="UBIQUITIN"/>
    <property type="match status" value="1"/>
</dbReference>
<dbReference type="Pfam" id="PF01020">
    <property type="entry name" value="Ribosomal_L40e"/>
    <property type="match status" value="1"/>
</dbReference>
<dbReference type="Pfam" id="PF00240">
    <property type="entry name" value="ubiquitin"/>
    <property type="match status" value="1"/>
</dbReference>
<dbReference type="PRINTS" id="PR00348">
    <property type="entry name" value="UBIQUITIN"/>
</dbReference>
<dbReference type="SMART" id="SM01377">
    <property type="entry name" value="Ribosomal_L40e"/>
    <property type="match status" value="1"/>
</dbReference>
<dbReference type="SMART" id="SM00213">
    <property type="entry name" value="UBQ"/>
    <property type="match status" value="1"/>
</dbReference>
<dbReference type="SUPFAM" id="SSF54236">
    <property type="entry name" value="Ubiquitin-like"/>
    <property type="match status" value="1"/>
</dbReference>
<dbReference type="PROSITE" id="PS00299">
    <property type="entry name" value="UBIQUITIN_1"/>
    <property type="match status" value="1"/>
</dbReference>
<dbReference type="PROSITE" id="PS50053">
    <property type="entry name" value="UBIQUITIN_2"/>
    <property type="match status" value="1"/>
</dbReference>
<protein>
    <recommendedName>
        <fullName evidence="4">Ubiquitin-ribosomal protein eL40 fusion protein</fullName>
    </recommendedName>
    <component>
        <recommendedName>
            <fullName>Ubiquitin</fullName>
        </recommendedName>
    </component>
    <component>
        <recommendedName>
            <fullName evidence="4">Large ribosomal subunit protein eL40</fullName>
        </recommendedName>
        <alternativeName>
            <fullName>60S ribosomal protein L40</fullName>
        </alternativeName>
        <alternativeName>
            <fullName>CEP52</fullName>
        </alternativeName>
    </component>
</protein>
<sequence>MQIFVKTLTGKTITLEVEPSDTIENVKAKIQDKEGIPPDQQRLIFAGKQLEDGRTLSDYNIQKESTLHLVLRLRGGIIEPSLRQLAQKYNCDKMICRKCYARLHPRAVNCRKKKCGHTNNLRPKKKVK</sequence>
<name>RL40_OPHHA</name>
<feature type="chain" id="PRO_0000114810" description="Ubiquitin">
    <location>
        <begin position="1"/>
        <end position="76"/>
    </location>
</feature>
<feature type="chain" id="PRO_0000138756" description="Large ribosomal subunit protein eL40">
    <location>
        <begin position="77"/>
        <end position="128"/>
    </location>
</feature>
<feature type="domain" description="Ubiquitin-like" evidence="3">
    <location>
        <begin position="1"/>
        <end position="76"/>
    </location>
</feature>
<feature type="site" description="Interacts with activating enzyme">
    <location>
        <position position="54"/>
    </location>
</feature>
<feature type="site" description="Essential for function">
    <location>
        <position position="68"/>
    </location>
</feature>
<feature type="site" description="Interacts with activating enzyme">
    <location>
        <position position="72"/>
    </location>
</feature>
<feature type="modified residue" description="N6,N6,N6-trimethyllysine" evidence="2">
    <location>
        <position position="98"/>
    </location>
</feature>
<feature type="cross-link" description="Glycyl lysine isopeptide (Lys-Gly) (interchain with G-Cter in ubiquitin)" evidence="2">
    <location>
        <position position="6"/>
    </location>
</feature>
<feature type="cross-link" description="Glycyl lysine isopeptide (Lys-Gly) (interchain with G-Cter in ubiquitin)" evidence="2">
    <location>
        <position position="11"/>
    </location>
</feature>
<feature type="cross-link" description="Glycyl lysine isopeptide (Lys-Gly) (interchain with G-Cter in ubiquitin)" evidence="2">
    <location>
        <position position="27"/>
    </location>
</feature>
<feature type="cross-link" description="Glycyl lysine isopeptide (Lys-Gly) (interchain with G-Cter in ubiquitin)" evidence="2">
    <location>
        <position position="29"/>
    </location>
</feature>
<feature type="cross-link" description="Glycyl lysine isopeptide (Lys-Gly) (interchain with G-Cter in ubiquitin)" evidence="2">
    <location>
        <position position="33"/>
    </location>
</feature>
<feature type="cross-link" description="Glycyl lysine isopeptide (Lys-Gly) (interchain with G-Cter in ubiquitin)" evidence="2">
    <location>
        <position position="48"/>
    </location>
</feature>
<feature type="cross-link" description="Glycyl lysine isopeptide (Lys-Gly) (interchain with G-Cter in ubiquitin)" evidence="2">
    <location>
        <position position="63"/>
    </location>
</feature>
<feature type="cross-link" description="Glycyl lysine isopeptide (Gly-Lys) (interchain with K-? in acceptor proteins)" evidence="3">
    <location>
        <position position="76"/>
    </location>
</feature>